<accession>A8F0B8</accession>
<protein>
    <recommendedName>
        <fullName evidence="1">Putative pyruvate, phosphate dikinase regulatory protein</fullName>
        <shortName evidence="1">PPDK regulatory protein</shortName>
        <ecNumber evidence="1">2.7.11.32</ecNumber>
        <ecNumber evidence="1">2.7.4.27</ecNumber>
    </recommendedName>
</protein>
<reference key="1">
    <citation type="journal article" date="2007" name="Genome Res.">
        <title>Lateral gene transfer between obligate intracellular bacteria: evidence from the Rickettsia massiliae genome.</title>
        <authorList>
            <person name="Blanc G."/>
            <person name="Ogata H."/>
            <person name="Robert C."/>
            <person name="Audic S."/>
            <person name="Claverie J.-M."/>
            <person name="Raoult D."/>
        </authorList>
    </citation>
    <scope>NUCLEOTIDE SEQUENCE [LARGE SCALE GENOMIC DNA]</scope>
    <source>
        <strain>Mtu5</strain>
    </source>
</reference>
<sequence>MTKLVIHLVSDSSVQTAKYAANSAIAQFTSVKPKLYHWPMIRNLELLNEVLSKIEYKRGIVLYTIADQELRKALTKFCYELKIPCISVIGKIIKEMSVFSGIEIEKEQNYNYKFDKTYFDTLNAIDYAIRHDDGQMLNELSEADIILIGPSRTSKTPTSVFLAYNGLKAANIPYVYNCPFPDFIEKDIDQLVVGLVINPNRLIEIREARLNLLQINENKSYTDFNIVQKECLEVRKICDQRNWPVIDVSTRSIEETAALIMRIYYNKKNKYNK</sequence>
<comment type="function">
    <text evidence="1">Bifunctional serine/threonine kinase and phosphorylase involved in the regulation of the pyruvate, phosphate dikinase (PPDK) by catalyzing its phosphorylation/dephosphorylation.</text>
</comment>
<comment type="catalytic activity">
    <reaction evidence="1">
        <text>N(tele)-phospho-L-histidyl/L-threonyl-[pyruvate, phosphate dikinase] + ADP = N(tele)-phospho-L-histidyl/O-phospho-L-threonyl-[pyruvate, phosphate dikinase] + AMP + H(+)</text>
        <dbReference type="Rhea" id="RHEA:43692"/>
        <dbReference type="Rhea" id="RHEA-COMP:10650"/>
        <dbReference type="Rhea" id="RHEA-COMP:10651"/>
        <dbReference type="ChEBI" id="CHEBI:15378"/>
        <dbReference type="ChEBI" id="CHEBI:30013"/>
        <dbReference type="ChEBI" id="CHEBI:61977"/>
        <dbReference type="ChEBI" id="CHEBI:83586"/>
        <dbReference type="ChEBI" id="CHEBI:456215"/>
        <dbReference type="ChEBI" id="CHEBI:456216"/>
        <dbReference type="EC" id="2.7.11.32"/>
    </reaction>
</comment>
<comment type="catalytic activity">
    <reaction evidence="1">
        <text>N(tele)-phospho-L-histidyl/O-phospho-L-threonyl-[pyruvate, phosphate dikinase] + phosphate + H(+) = N(tele)-phospho-L-histidyl/L-threonyl-[pyruvate, phosphate dikinase] + diphosphate</text>
        <dbReference type="Rhea" id="RHEA:43696"/>
        <dbReference type="Rhea" id="RHEA-COMP:10650"/>
        <dbReference type="Rhea" id="RHEA-COMP:10651"/>
        <dbReference type="ChEBI" id="CHEBI:15378"/>
        <dbReference type="ChEBI" id="CHEBI:30013"/>
        <dbReference type="ChEBI" id="CHEBI:33019"/>
        <dbReference type="ChEBI" id="CHEBI:43474"/>
        <dbReference type="ChEBI" id="CHEBI:61977"/>
        <dbReference type="ChEBI" id="CHEBI:83586"/>
        <dbReference type="EC" id="2.7.4.27"/>
    </reaction>
</comment>
<comment type="similarity">
    <text evidence="1">Belongs to the pyruvate, phosphate/water dikinase regulatory protein family. PDRP subfamily.</text>
</comment>
<gene>
    <name type="ordered locus">RMA_0001</name>
</gene>
<proteinExistence type="inferred from homology"/>
<name>PDRP_RICM5</name>
<evidence type="ECO:0000255" key="1">
    <source>
        <dbReference type="HAMAP-Rule" id="MF_00921"/>
    </source>
</evidence>
<feature type="chain" id="PRO_1000073009" description="Putative pyruvate, phosphate dikinase regulatory protein">
    <location>
        <begin position="1"/>
        <end position="273"/>
    </location>
</feature>
<feature type="binding site" evidence="1">
    <location>
        <begin position="149"/>
        <end position="156"/>
    </location>
    <ligand>
        <name>ADP</name>
        <dbReference type="ChEBI" id="CHEBI:456216"/>
    </ligand>
</feature>
<keyword id="KW-0418">Kinase</keyword>
<keyword id="KW-0547">Nucleotide-binding</keyword>
<keyword id="KW-0723">Serine/threonine-protein kinase</keyword>
<keyword id="KW-0808">Transferase</keyword>
<dbReference type="EC" id="2.7.11.32" evidence="1"/>
<dbReference type="EC" id="2.7.4.27" evidence="1"/>
<dbReference type="EMBL" id="CP000683">
    <property type="protein sequence ID" value="ABV84350.1"/>
    <property type="molecule type" value="Genomic_DNA"/>
</dbReference>
<dbReference type="RefSeq" id="WP_012152331.1">
    <property type="nucleotide sequence ID" value="NC_009900.1"/>
</dbReference>
<dbReference type="SMR" id="A8F0B8"/>
<dbReference type="KEGG" id="rms:RMA_0001"/>
<dbReference type="HOGENOM" id="CLU_046206_2_0_5"/>
<dbReference type="Proteomes" id="UP000001311">
    <property type="component" value="Chromosome"/>
</dbReference>
<dbReference type="GO" id="GO:0043531">
    <property type="term" value="F:ADP binding"/>
    <property type="evidence" value="ECO:0007669"/>
    <property type="project" value="UniProtKB-UniRule"/>
</dbReference>
<dbReference type="GO" id="GO:0005524">
    <property type="term" value="F:ATP binding"/>
    <property type="evidence" value="ECO:0007669"/>
    <property type="project" value="InterPro"/>
</dbReference>
<dbReference type="GO" id="GO:0016776">
    <property type="term" value="F:phosphotransferase activity, phosphate group as acceptor"/>
    <property type="evidence" value="ECO:0007669"/>
    <property type="project" value="UniProtKB-UniRule"/>
</dbReference>
<dbReference type="GO" id="GO:0004674">
    <property type="term" value="F:protein serine/threonine kinase activity"/>
    <property type="evidence" value="ECO:0007669"/>
    <property type="project" value="UniProtKB-UniRule"/>
</dbReference>
<dbReference type="Gene3D" id="3.40.50.300">
    <property type="entry name" value="P-loop containing nucleotide triphosphate hydrolases"/>
    <property type="match status" value="1"/>
</dbReference>
<dbReference type="HAMAP" id="MF_00921">
    <property type="entry name" value="PDRP"/>
    <property type="match status" value="1"/>
</dbReference>
<dbReference type="InterPro" id="IPR005177">
    <property type="entry name" value="Kinase-pyrophosphorylase"/>
</dbReference>
<dbReference type="InterPro" id="IPR027417">
    <property type="entry name" value="P-loop_NTPase"/>
</dbReference>
<dbReference type="InterPro" id="IPR026565">
    <property type="entry name" value="PPDK_reg"/>
</dbReference>
<dbReference type="NCBIfam" id="NF003742">
    <property type="entry name" value="PRK05339.1"/>
    <property type="match status" value="1"/>
</dbReference>
<dbReference type="PANTHER" id="PTHR31756">
    <property type="entry name" value="PYRUVATE, PHOSPHATE DIKINASE REGULATORY PROTEIN 1, CHLOROPLASTIC"/>
    <property type="match status" value="1"/>
</dbReference>
<dbReference type="PANTHER" id="PTHR31756:SF3">
    <property type="entry name" value="PYRUVATE, PHOSPHATE DIKINASE REGULATORY PROTEIN 1, CHLOROPLASTIC"/>
    <property type="match status" value="1"/>
</dbReference>
<dbReference type="Pfam" id="PF03618">
    <property type="entry name" value="Kinase-PPPase"/>
    <property type="match status" value="1"/>
</dbReference>
<organism>
    <name type="scientific">Rickettsia massiliae (strain Mtu5)</name>
    <dbReference type="NCBI Taxonomy" id="416276"/>
    <lineage>
        <taxon>Bacteria</taxon>
        <taxon>Pseudomonadati</taxon>
        <taxon>Pseudomonadota</taxon>
        <taxon>Alphaproteobacteria</taxon>
        <taxon>Rickettsiales</taxon>
        <taxon>Rickettsiaceae</taxon>
        <taxon>Rickettsieae</taxon>
        <taxon>Rickettsia</taxon>
        <taxon>spotted fever group</taxon>
    </lineage>
</organism>